<protein>
    <recommendedName>
        <fullName evidence="1">Undecaprenyl-diphosphatase</fullName>
        <ecNumber evidence="1">3.6.1.27</ecNumber>
    </recommendedName>
    <alternativeName>
        <fullName evidence="1">Bacitracin resistance protein</fullName>
    </alternativeName>
    <alternativeName>
        <fullName evidence="1">Undecaprenyl pyrophosphate phosphatase</fullName>
    </alternativeName>
</protein>
<feature type="chain" id="PRO_0000151123" description="Undecaprenyl-diphosphatase">
    <location>
        <begin position="1"/>
        <end position="264"/>
    </location>
</feature>
<feature type="transmembrane region" description="Helical" evidence="1">
    <location>
        <begin position="7"/>
        <end position="27"/>
    </location>
</feature>
<feature type="transmembrane region" description="Helical" evidence="1">
    <location>
        <begin position="45"/>
        <end position="65"/>
    </location>
</feature>
<feature type="transmembrane region" description="Helical" evidence="1">
    <location>
        <begin position="86"/>
        <end position="106"/>
    </location>
</feature>
<feature type="transmembrane region" description="Helical" evidence="1">
    <location>
        <begin position="109"/>
        <end position="129"/>
    </location>
</feature>
<feature type="transmembrane region" description="Helical" evidence="1">
    <location>
        <begin position="145"/>
        <end position="165"/>
    </location>
</feature>
<feature type="transmembrane region" description="Helical" evidence="1">
    <location>
        <begin position="186"/>
        <end position="206"/>
    </location>
</feature>
<feature type="transmembrane region" description="Helical" evidence="1">
    <location>
        <begin position="215"/>
        <end position="235"/>
    </location>
</feature>
<feature type="transmembrane region" description="Helical" evidence="1">
    <location>
        <begin position="244"/>
        <end position="264"/>
    </location>
</feature>
<evidence type="ECO:0000255" key="1">
    <source>
        <dbReference type="HAMAP-Rule" id="MF_01006"/>
    </source>
</evidence>
<dbReference type="EC" id="3.6.1.27" evidence="1"/>
<dbReference type="EMBL" id="AE013218">
    <property type="protein sequence ID" value="AAM67630.1"/>
    <property type="molecule type" value="Genomic_DNA"/>
</dbReference>
<dbReference type="RefSeq" id="WP_011053596.1">
    <property type="nucleotide sequence ID" value="NC_004061.1"/>
</dbReference>
<dbReference type="SMR" id="Q8KA52"/>
<dbReference type="STRING" id="198804.BUsg_059"/>
<dbReference type="GeneID" id="93003526"/>
<dbReference type="KEGG" id="bas:BUsg_059"/>
<dbReference type="eggNOG" id="COG1968">
    <property type="taxonomic scope" value="Bacteria"/>
</dbReference>
<dbReference type="HOGENOM" id="CLU_060296_2_0_6"/>
<dbReference type="Proteomes" id="UP000000416">
    <property type="component" value="Chromosome"/>
</dbReference>
<dbReference type="GO" id="GO:0005886">
    <property type="term" value="C:plasma membrane"/>
    <property type="evidence" value="ECO:0007669"/>
    <property type="project" value="UniProtKB-SubCell"/>
</dbReference>
<dbReference type="GO" id="GO:0050380">
    <property type="term" value="F:undecaprenyl-diphosphatase activity"/>
    <property type="evidence" value="ECO:0007669"/>
    <property type="project" value="UniProtKB-UniRule"/>
</dbReference>
<dbReference type="GO" id="GO:0071555">
    <property type="term" value="P:cell wall organization"/>
    <property type="evidence" value="ECO:0007669"/>
    <property type="project" value="UniProtKB-KW"/>
</dbReference>
<dbReference type="GO" id="GO:0009252">
    <property type="term" value="P:peptidoglycan biosynthetic process"/>
    <property type="evidence" value="ECO:0007669"/>
    <property type="project" value="UniProtKB-KW"/>
</dbReference>
<dbReference type="GO" id="GO:0008360">
    <property type="term" value="P:regulation of cell shape"/>
    <property type="evidence" value="ECO:0007669"/>
    <property type="project" value="UniProtKB-KW"/>
</dbReference>
<dbReference type="GO" id="GO:0046677">
    <property type="term" value="P:response to antibiotic"/>
    <property type="evidence" value="ECO:0007669"/>
    <property type="project" value="UniProtKB-UniRule"/>
</dbReference>
<dbReference type="HAMAP" id="MF_01006">
    <property type="entry name" value="Undec_diphosphatase"/>
    <property type="match status" value="1"/>
</dbReference>
<dbReference type="InterPro" id="IPR003824">
    <property type="entry name" value="UppP"/>
</dbReference>
<dbReference type="NCBIfam" id="NF001390">
    <property type="entry name" value="PRK00281.1-4"/>
    <property type="match status" value="1"/>
</dbReference>
<dbReference type="NCBIfam" id="TIGR00753">
    <property type="entry name" value="undec_PP_bacA"/>
    <property type="match status" value="1"/>
</dbReference>
<dbReference type="PANTHER" id="PTHR30622">
    <property type="entry name" value="UNDECAPRENYL-DIPHOSPHATASE"/>
    <property type="match status" value="1"/>
</dbReference>
<dbReference type="PANTHER" id="PTHR30622:SF3">
    <property type="entry name" value="UNDECAPRENYL-DIPHOSPHATASE"/>
    <property type="match status" value="1"/>
</dbReference>
<dbReference type="Pfam" id="PF02673">
    <property type="entry name" value="BacA"/>
    <property type="match status" value="1"/>
</dbReference>
<name>UPPP_BUCAP</name>
<keyword id="KW-0046">Antibiotic resistance</keyword>
<keyword id="KW-1003">Cell membrane</keyword>
<keyword id="KW-0133">Cell shape</keyword>
<keyword id="KW-0961">Cell wall biogenesis/degradation</keyword>
<keyword id="KW-0378">Hydrolase</keyword>
<keyword id="KW-0472">Membrane</keyword>
<keyword id="KW-0573">Peptidoglycan synthesis</keyword>
<keyword id="KW-0812">Transmembrane</keyword>
<keyword id="KW-1133">Transmembrane helix</keyword>
<sequence length="264" mass="29976">MFFFHKIVIPIIIGIIQGITEFFPVSSTGHMIIFIDWLDIKNKDTKILEIFVQLGSTISVFLFFYKKIIQILQLPMQKESNEKKNIHVLISILPTMFLGLIFYNKIKSLFNPTNVMYALILGGFFLIIAEKFKPKKPKTNSIKEINLVQSLIIGCFQTLCLYPGFSRSGASIAIATLLGFKRSVAVNFSFIISIPLIAGASVLDLIKNIQNVNMLNIPYLFSGFTISFIISFLLIKKFITILNKVSLTFFGIYRFLIAGIIYFI</sequence>
<proteinExistence type="inferred from homology"/>
<accession>Q8KA52</accession>
<reference key="1">
    <citation type="journal article" date="2002" name="Science">
        <title>50 million years of genomic stasis in endosymbiotic bacteria.</title>
        <authorList>
            <person name="Tamas I."/>
            <person name="Klasson L."/>
            <person name="Canbaeck B."/>
            <person name="Naeslund A.K."/>
            <person name="Eriksson A.-S."/>
            <person name="Wernegreen J.J."/>
            <person name="Sandstroem J.P."/>
            <person name="Moran N.A."/>
            <person name="Andersson S.G.E."/>
        </authorList>
    </citation>
    <scope>NUCLEOTIDE SEQUENCE [LARGE SCALE GENOMIC DNA]</scope>
    <source>
        <strain>Sg</strain>
    </source>
</reference>
<gene>
    <name evidence="1" type="primary">uppP</name>
    <name type="synonym">bacA</name>
    <name type="synonym">upk</name>
    <name type="ordered locus">BUsg_059</name>
</gene>
<organism>
    <name type="scientific">Buchnera aphidicola subsp. Schizaphis graminum (strain Sg)</name>
    <dbReference type="NCBI Taxonomy" id="198804"/>
    <lineage>
        <taxon>Bacteria</taxon>
        <taxon>Pseudomonadati</taxon>
        <taxon>Pseudomonadota</taxon>
        <taxon>Gammaproteobacteria</taxon>
        <taxon>Enterobacterales</taxon>
        <taxon>Erwiniaceae</taxon>
        <taxon>Buchnera</taxon>
    </lineage>
</organism>
<comment type="function">
    <text evidence="1">Catalyzes the dephosphorylation of undecaprenyl diphosphate (UPP). Confers resistance to bacitracin.</text>
</comment>
<comment type="catalytic activity">
    <reaction evidence="1">
        <text>di-trans,octa-cis-undecaprenyl diphosphate + H2O = di-trans,octa-cis-undecaprenyl phosphate + phosphate + H(+)</text>
        <dbReference type="Rhea" id="RHEA:28094"/>
        <dbReference type="ChEBI" id="CHEBI:15377"/>
        <dbReference type="ChEBI" id="CHEBI:15378"/>
        <dbReference type="ChEBI" id="CHEBI:43474"/>
        <dbReference type="ChEBI" id="CHEBI:58405"/>
        <dbReference type="ChEBI" id="CHEBI:60392"/>
        <dbReference type="EC" id="3.6.1.27"/>
    </reaction>
</comment>
<comment type="subcellular location">
    <subcellularLocation>
        <location evidence="1">Cell membrane</location>
        <topology evidence="1">Multi-pass membrane protein</topology>
    </subcellularLocation>
</comment>
<comment type="miscellaneous">
    <text>Bacitracin is thought to be involved in the inhibition of peptidoglycan synthesis by sequestering undecaprenyl diphosphate, thereby reducing the pool of lipid carrier available.</text>
</comment>
<comment type="similarity">
    <text evidence="1">Belongs to the UppP family.</text>
</comment>